<keyword id="KW-0067">ATP-binding</keyword>
<keyword id="KW-0997">Cell inner membrane</keyword>
<keyword id="KW-1003">Cell membrane</keyword>
<keyword id="KW-0472">Membrane</keyword>
<keyword id="KW-0547">Nucleotide-binding</keyword>
<keyword id="KW-1278">Translocase</keyword>
<keyword id="KW-0813">Transport</keyword>
<proteinExistence type="inferred from homology"/>
<feature type="chain" id="PRO_0000272066" description="Lipoprotein-releasing system ATP-binding protein LolD">
    <location>
        <begin position="1"/>
        <end position="252"/>
    </location>
</feature>
<feature type="domain" description="ABC transporter" evidence="1">
    <location>
        <begin position="27"/>
        <end position="252"/>
    </location>
</feature>
<feature type="region of interest" description="Disordered" evidence="2">
    <location>
        <begin position="1"/>
        <end position="20"/>
    </location>
</feature>
<feature type="binding site" evidence="1">
    <location>
        <begin position="63"/>
        <end position="70"/>
    </location>
    <ligand>
        <name>ATP</name>
        <dbReference type="ChEBI" id="CHEBI:30616"/>
    </ligand>
</feature>
<protein>
    <recommendedName>
        <fullName evidence="1">Lipoprotein-releasing system ATP-binding protein LolD</fullName>
        <ecNumber evidence="1">7.6.2.-</ecNumber>
    </recommendedName>
</protein>
<comment type="function">
    <text evidence="1">Part of the ABC transporter complex LolCDE involved in the translocation of mature outer membrane-directed lipoproteins, from the inner membrane to the periplasmic chaperone, LolA. Responsible for the formation of the LolA-lipoprotein complex in an ATP-dependent manner.</text>
</comment>
<comment type="subunit">
    <text evidence="1">The complex is composed of two ATP-binding proteins (LolD) and two transmembrane proteins (LolC and LolE).</text>
</comment>
<comment type="subcellular location">
    <subcellularLocation>
        <location evidence="1">Cell inner membrane</location>
        <topology evidence="1">Peripheral membrane protein</topology>
    </subcellularLocation>
</comment>
<comment type="similarity">
    <text evidence="1">Belongs to the ABC transporter superfamily. Lipoprotein translocase (TC 3.A.1.125) family.</text>
</comment>
<dbReference type="EC" id="7.6.2.-" evidence="1"/>
<dbReference type="EMBL" id="CP000151">
    <property type="protein sequence ID" value="ABB09013.1"/>
    <property type="molecule type" value="Genomic_DNA"/>
</dbReference>
<dbReference type="SMR" id="Q39EV3"/>
<dbReference type="KEGG" id="bur:Bcep18194_A5419"/>
<dbReference type="PATRIC" id="fig|482957.22.peg.2372"/>
<dbReference type="HOGENOM" id="CLU_000604_1_22_4"/>
<dbReference type="Proteomes" id="UP000002705">
    <property type="component" value="Chromosome 1"/>
</dbReference>
<dbReference type="GO" id="GO:0005886">
    <property type="term" value="C:plasma membrane"/>
    <property type="evidence" value="ECO:0007669"/>
    <property type="project" value="UniProtKB-SubCell"/>
</dbReference>
<dbReference type="GO" id="GO:0005524">
    <property type="term" value="F:ATP binding"/>
    <property type="evidence" value="ECO:0007669"/>
    <property type="project" value="UniProtKB-KW"/>
</dbReference>
<dbReference type="GO" id="GO:0016887">
    <property type="term" value="F:ATP hydrolysis activity"/>
    <property type="evidence" value="ECO:0007669"/>
    <property type="project" value="InterPro"/>
</dbReference>
<dbReference type="GO" id="GO:0022857">
    <property type="term" value="F:transmembrane transporter activity"/>
    <property type="evidence" value="ECO:0007669"/>
    <property type="project" value="TreeGrafter"/>
</dbReference>
<dbReference type="GO" id="GO:0044874">
    <property type="term" value="P:lipoprotein localization to outer membrane"/>
    <property type="evidence" value="ECO:0007669"/>
    <property type="project" value="TreeGrafter"/>
</dbReference>
<dbReference type="GO" id="GO:0089705">
    <property type="term" value="P:protein localization to outer membrane"/>
    <property type="evidence" value="ECO:0007669"/>
    <property type="project" value="TreeGrafter"/>
</dbReference>
<dbReference type="CDD" id="cd03255">
    <property type="entry name" value="ABC_MJ0796_LolCDE_FtsE"/>
    <property type="match status" value="1"/>
</dbReference>
<dbReference type="FunFam" id="3.40.50.300:FF:000230">
    <property type="entry name" value="Lipoprotein-releasing system ATP-binding protein LolD"/>
    <property type="match status" value="1"/>
</dbReference>
<dbReference type="Gene3D" id="3.40.50.300">
    <property type="entry name" value="P-loop containing nucleotide triphosphate hydrolases"/>
    <property type="match status" value="1"/>
</dbReference>
<dbReference type="InterPro" id="IPR003593">
    <property type="entry name" value="AAA+_ATPase"/>
</dbReference>
<dbReference type="InterPro" id="IPR003439">
    <property type="entry name" value="ABC_transporter-like_ATP-bd"/>
</dbReference>
<dbReference type="InterPro" id="IPR017871">
    <property type="entry name" value="ABC_transporter-like_CS"/>
</dbReference>
<dbReference type="InterPro" id="IPR015854">
    <property type="entry name" value="ABC_transpr_LolD-like"/>
</dbReference>
<dbReference type="InterPro" id="IPR011924">
    <property type="entry name" value="LolD_lipo_ATP-bd"/>
</dbReference>
<dbReference type="InterPro" id="IPR017911">
    <property type="entry name" value="MacB-like_ATP-bd"/>
</dbReference>
<dbReference type="InterPro" id="IPR027417">
    <property type="entry name" value="P-loop_NTPase"/>
</dbReference>
<dbReference type="NCBIfam" id="TIGR02211">
    <property type="entry name" value="LolD_lipo_ex"/>
    <property type="match status" value="1"/>
</dbReference>
<dbReference type="PANTHER" id="PTHR24220">
    <property type="entry name" value="IMPORT ATP-BINDING PROTEIN"/>
    <property type="match status" value="1"/>
</dbReference>
<dbReference type="PANTHER" id="PTHR24220:SF689">
    <property type="entry name" value="LIPOPROTEIN-RELEASING SYSTEM ATP-BINDING PROTEIN LOLD"/>
    <property type="match status" value="1"/>
</dbReference>
<dbReference type="Pfam" id="PF00005">
    <property type="entry name" value="ABC_tran"/>
    <property type="match status" value="1"/>
</dbReference>
<dbReference type="SMART" id="SM00382">
    <property type="entry name" value="AAA"/>
    <property type="match status" value="1"/>
</dbReference>
<dbReference type="SUPFAM" id="SSF52540">
    <property type="entry name" value="P-loop containing nucleoside triphosphate hydrolases"/>
    <property type="match status" value="1"/>
</dbReference>
<dbReference type="PROSITE" id="PS00211">
    <property type="entry name" value="ABC_TRANSPORTER_1"/>
    <property type="match status" value="1"/>
</dbReference>
<dbReference type="PROSITE" id="PS50893">
    <property type="entry name" value="ABC_TRANSPORTER_2"/>
    <property type="match status" value="1"/>
</dbReference>
<dbReference type="PROSITE" id="PS51244">
    <property type="entry name" value="LOLD"/>
    <property type="match status" value="1"/>
</dbReference>
<reference key="1">
    <citation type="submission" date="2005-10" db="EMBL/GenBank/DDBJ databases">
        <title>Complete sequence of chromosome 1 of Burkholderia sp. 383.</title>
        <authorList>
            <consortium name="US DOE Joint Genome Institute"/>
            <person name="Copeland A."/>
            <person name="Lucas S."/>
            <person name="Lapidus A."/>
            <person name="Barry K."/>
            <person name="Detter J.C."/>
            <person name="Glavina T."/>
            <person name="Hammon N."/>
            <person name="Israni S."/>
            <person name="Pitluck S."/>
            <person name="Chain P."/>
            <person name="Malfatti S."/>
            <person name="Shin M."/>
            <person name="Vergez L."/>
            <person name="Schmutz J."/>
            <person name="Larimer F."/>
            <person name="Land M."/>
            <person name="Kyrpides N."/>
            <person name="Lykidis A."/>
            <person name="Richardson P."/>
        </authorList>
    </citation>
    <scope>NUCLEOTIDE SEQUENCE [LARGE SCALE GENOMIC DNA]</scope>
    <source>
        <strain>ATCC 17760 / DSM 23089 / LMG 22485 / NCIMB 9086 / R18194 / 383</strain>
    </source>
</reference>
<evidence type="ECO:0000255" key="1">
    <source>
        <dbReference type="HAMAP-Rule" id="MF_01708"/>
    </source>
</evidence>
<evidence type="ECO:0000256" key="2">
    <source>
        <dbReference type="SAM" id="MobiDB-lite"/>
    </source>
</evidence>
<organism>
    <name type="scientific">Burkholderia lata (strain ATCC 17760 / DSM 23089 / LMG 22485 / NCIMB 9086 / R18194 / 383)</name>
    <dbReference type="NCBI Taxonomy" id="482957"/>
    <lineage>
        <taxon>Bacteria</taxon>
        <taxon>Pseudomonadati</taxon>
        <taxon>Pseudomonadota</taxon>
        <taxon>Betaproteobacteria</taxon>
        <taxon>Burkholderiales</taxon>
        <taxon>Burkholderiaceae</taxon>
        <taxon>Burkholderia</taxon>
        <taxon>Burkholderia cepacia complex</taxon>
    </lineage>
</organism>
<name>LOLD_BURL3</name>
<sequence length="252" mass="27676">MNDRATAFADSRQHNRQDSAGMQEYVLQARGVTKAFVQGGFNVQVLNNTELTVRRGEKLAVVGASGSGKSTLLHVLGGLDEPSAGEVSLLGKPFTQLAERERNELRNRALGFVYQFHHLLPEFTALDNVAMPLRIRRMTTEDAREQAQTMLERVGLGPRAKHRPGELSGGERQRVAIARALVTKPACVLADEPTGNLDGTTADTVFNLMLELSETLETSFVIVTHDPDLAARCDRIMRLRDGVLHEEPALPV</sequence>
<gene>
    <name evidence="1" type="primary">lolD</name>
    <name type="ordered locus">Bcep18194_A5419</name>
</gene>
<accession>Q39EV3</accession>